<dbReference type="EMBL" id="CP000572">
    <property type="protein sequence ID" value="ABN88913.1"/>
    <property type="molecule type" value="Genomic_DNA"/>
</dbReference>
<dbReference type="RefSeq" id="WP_004185828.1">
    <property type="nucleotide sequence ID" value="NC_009076.1"/>
</dbReference>
<dbReference type="SMR" id="A3NTA0"/>
<dbReference type="GeneID" id="93059688"/>
<dbReference type="KEGG" id="bpl:BURPS1106A_1292"/>
<dbReference type="HOGENOM" id="CLU_148518_0_0_4"/>
<dbReference type="Proteomes" id="UP000006738">
    <property type="component" value="Chromosome I"/>
</dbReference>
<dbReference type="GO" id="GO:0022627">
    <property type="term" value="C:cytosolic small ribosomal subunit"/>
    <property type="evidence" value="ECO:0007669"/>
    <property type="project" value="TreeGrafter"/>
</dbReference>
<dbReference type="GO" id="GO:0019843">
    <property type="term" value="F:rRNA binding"/>
    <property type="evidence" value="ECO:0007669"/>
    <property type="project" value="UniProtKB-UniRule"/>
</dbReference>
<dbReference type="GO" id="GO:0003735">
    <property type="term" value="F:structural constituent of ribosome"/>
    <property type="evidence" value="ECO:0007669"/>
    <property type="project" value="InterPro"/>
</dbReference>
<dbReference type="GO" id="GO:0006412">
    <property type="term" value="P:translation"/>
    <property type="evidence" value="ECO:0007669"/>
    <property type="project" value="UniProtKB-UniRule"/>
</dbReference>
<dbReference type="CDD" id="cd00353">
    <property type="entry name" value="Ribosomal_S15p_S13e"/>
    <property type="match status" value="1"/>
</dbReference>
<dbReference type="FunFam" id="1.10.287.10:FF:000002">
    <property type="entry name" value="30S ribosomal protein S15"/>
    <property type="match status" value="1"/>
</dbReference>
<dbReference type="Gene3D" id="6.10.250.3130">
    <property type="match status" value="1"/>
</dbReference>
<dbReference type="Gene3D" id="1.10.287.10">
    <property type="entry name" value="S15/NS1, RNA-binding"/>
    <property type="match status" value="1"/>
</dbReference>
<dbReference type="HAMAP" id="MF_01343_B">
    <property type="entry name" value="Ribosomal_uS15_B"/>
    <property type="match status" value="1"/>
</dbReference>
<dbReference type="InterPro" id="IPR000589">
    <property type="entry name" value="Ribosomal_uS15"/>
</dbReference>
<dbReference type="InterPro" id="IPR005290">
    <property type="entry name" value="Ribosomal_uS15_bac-type"/>
</dbReference>
<dbReference type="InterPro" id="IPR009068">
    <property type="entry name" value="uS15_NS1_RNA-bd_sf"/>
</dbReference>
<dbReference type="NCBIfam" id="TIGR00952">
    <property type="entry name" value="S15_bact"/>
    <property type="match status" value="1"/>
</dbReference>
<dbReference type="PANTHER" id="PTHR23321">
    <property type="entry name" value="RIBOSOMAL PROTEIN S15, BACTERIAL AND ORGANELLAR"/>
    <property type="match status" value="1"/>
</dbReference>
<dbReference type="PANTHER" id="PTHR23321:SF26">
    <property type="entry name" value="SMALL RIBOSOMAL SUBUNIT PROTEIN US15M"/>
    <property type="match status" value="1"/>
</dbReference>
<dbReference type="Pfam" id="PF00312">
    <property type="entry name" value="Ribosomal_S15"/>
    <property type="match status" value="1"/>
</dbReference>
<dbReference type="SMART" id="SM01387">
    <property type="entry name" value="Ribosomal_S15"/>
    <property type="match status" value="1"/>
</dbReference>
<dbReference type="SUPFAM" id="SSF47060">
    <property type="entry name" value="S15/NS1 RNA-binding domain"/>
    <property type="match status" value="1"/>
</dbReference>
<dbReference type="PROSITE" id="PS00362">
    <property type="entry name" value="RIBOSOMAL_S15"/>
    <property type="match status" value="1"/>
</dbReference>
<protein>
    <recommendedName>
        <fullName evidence="1">Small ribosomal subunit protein uS15</fullName>
    </recommendedName>
    <alternativeName>
        <fullName evidence="2">30S ribosomal protein S15</fullName>
    </alternativeName>
</protein>
<proteinExistence type="inferred from homology"/>
<evidence type="ECO:0000255" key="1">
    <source>
        <dbReference type="HAMAP-Rule" id="MF_01343"/>
    </source>
</evidence>
<evidence type="ECO:0000305" key="2"/>
<comment type="function">
    <text evidence="1">One of the primary rRNA binding proteins, it binds directly to 16S rRNA where it helps nucleate assembly of the platform of the 30S subunit by binding and bridging several RNA helices of the 16S rRNA.</text>
</comment>
<comment type="function">
    <text evidence="1">Forms an intersubunit bridge (bridge B4) with the 23S rRNA of the 50S subunit in the ribosome.</text>
</comment>
<comment type="subunit">
    <text evidence="1">Part of the 30S ribosomal subunit. Forms a bridge to the 50S subunit in the 70S ribosome, contacting the 23S rRNA.</text>
</comment>
<comment type="similarity">
    <text evidence="1">Belongs to the universal ribosomal protein uS15 family.</text>
</comment>
<feature type="chain" id="PRO_1000054763" description="Small ribosomal subunit protein uS15">
    <location>
        <begin position="1"/>
        <end position="89"/>
    </location>
</feature>
<gene>
    <name evidence="1" type="primary">rpsO</name>
    <name type="ordered locus">BURPS1106A_1292</name>
</gene>
<sequence>MSVADIKKSEVVAQFARGANDTGSPEVQVALLTARITELTGHFKTHAKDHHSRRGLLRMVSRRRKLLDYLKGKDADRYRALIEKLGLRK</sequence>
<reference key="1">
    <citation type="journal article" date="2010" name="Genome Biol. Evol.">
        <title>Continuing evolution of Burkholderia mallei through genome reduction and large-scale rearrangements.</title>
        <authorList>
            <person name="Losada L."/>
            <person name="Ronning C.M."/>
            <person name="DeShazer D."/>
            <person name="Woods D."/>
            <person name="Fedorova N."/>
            <person name="Kim H.S."/>
            <person name="Shabalina S.A."/>
            <person name="Pearson T.R."/>
            <person name="Brinkac L."/>
            <person name="Tan P."/>
            <person name="Nandi T."/>
            <person name="Crabtree J."/>
            <person name="Badger J."/>
            <person name="Beckstrom-Sternberg S."/>
            <person name="Saqib M."/>
            <person name="Schutzer S.E."/>
            <person name="Keim P."/>
            <person name="Nierman W.C."/>
        </authorList>
    </citation>
    <scope>NUCLEOTIDE SEQUENCE [LARGE SCALE GENOMIC DNA]</scope>
    <source>
        <strain>1106a</strain>
    </source>
</reference>
<organism>
    <name type="scientific">Burkholderia pseudomallei (strain 1106a)</name>
    <dbReference type="NCBI Taxonomy" id="357348"/>
    <lineage>
        <taxon>Bacteria</taxon>
        <taxon>Pseudomonadati</taxon>
        <taxon>Pseudomonadota</taxon>
        <taxon>Betaproteobacteria</taxon>
        <taxon>Burkholderiales</taxon>
        <taxon>Burkholderiaceae</taxon>
        <taxon>Burkholderia</taxon>
        <taxon>pseudomallei group</taxon>
    </lineage>
</organism>
<keyword id="KW-0687">Ribonucleoprotein</keyword>
<keyword id="KW-0689">Ribosomal protein</keyword>
<keyword id="KW-0694">RNA-binding</keyword>
<keyword id="KW-0699">rRNA-binding</keyword>
<name>RS15_BURP0</name>
<accession>A3NTA0</accession>